<gene>
    <name type="primary">PETE</name>
</gene>
<comment type="function">
    <text evidence="1">Participates in electron transfer between P700 and the cytochrome b6-f complex in photosystem I.</text>
</comment>
<comment type="cofactor">
    <cofactor evidence="1">
        <name>Cu(2+)</name>
        <dbReference type="ChEBI" id="CHEBI:29036"/>
    </cofactor>
</comment>
<comment type="subcellular location">
    <subcellularLocation>
        <location evidence="2">Plastid</location>
        <location evidence="2">Chloroplast thylakoid membrane</location>
        <topology evidence="1">Peripheral membrane protein</topology>
        <orientation evidence="1">Lumenal side</orientation>
    </subcellularLocation>
    <text>Loosely bound to the inner thylakoid membrane surface in chloroplasts (By similarity).</text>
</comment>
<comment type="similarity">
    <text evidence="3">Belongs to the plastocyanin family.</text>
</comment>
<proteinExistence type="evidence at protein level"/>
<dbReference type="PIR" id="JU0073">
    <property type="entry name" value="CUUV"/>
</dbReference>
<dbReference type="SMR" id="P13133"/>
<dbReference type="GO" id="GO:0009543">
    <property type="term" value="C:chloroplast thylakoid lumen"/>
    <property type="evidence" value="ECO:0007669"/>
    <property type="project" value="TreeGrafter"/>
</dbReference>
<dbReference type="GO" id="GO:0009535">
    <property type="term" value="C:chloroplast thylakoid membrane"/>
    <property type="evidence" value="ECO:0007669"/>
    <property type="project" value="UniProtKB-SubCell"/>
</dbReference>
<dbReference type="GO" id="GO:0005507">
    <property type="term" value="F:copper ion binding"/>
    <property type="evidence" value="ECO:0007669"/>
    <property type="project" value="InterPro"/>
</dbReference>
<dbReference type="GO" id="GO:0046028">
    <property type="term" value="F:electron transporter, transferring electrons from cytochrome b6/f complex of photosystem II activity"/>
    <property type="evidence" value="ECO:0007669"/>
    <property type="project" value="TreeGrafter"/>
</dbReference>
<dbReference type="CDD" id="cd04219">
    <property type="entry name" value="Plastocyanin"/>
    <property type="match status" value="1"/>
</dbReference>
<dbReference type="Gene3D" id="2.60.40.420">
    <property type="entry name" value="Cupredoxins - blue copper proteins"/>
    <property type="match status" value="1"/>
</dbReference>
<dbReference type="InterPro" id="IPR000923">
    <property type="entry name" value="BlueCu_1"/>
</dbReference>
<dbReference type="InterPro" id="IPR028871">
    <property type="entry name" value="BlueCu_1_BS"/>
</dbReference>
<dbReference type="InterPro" id="IPR001235">
    <property type="entry name" value="Copper_blue_Plastocyanin"/>
</dbReference>
<dbReference type="InterPro" id="IPR008972">
    <property type="entry name" value="Cupredoxin"/>
</dbReference>
<dbReference type="InterPro" id="IPR002387">
    <property type="entry name" value="Plastocyanin"/>
</dbReference>
<dbReference type="NCBIfam" id="TIGR02656">
    <property type="entry name" value="cyanin_plasto"/>
    <property type="match status" value="1"/>
</dbReference>
<dbReference type="PANTHER" id="PTHR34192">
    <property type="entry name" value="PLASTOCYANIN MAJOR ISOFORM, CHLOROPLASTIC-RELATED"/>
    <property type="match status" value="1"/>
</dbReference>
<dbReference type="PANTHER" id="PTHR34192:SF10">
    <property type="entry name" value="PLASTOCYANIN MAJOR ISOFORM, CHLOROPLASTIC-RELATED"/>
    <property type="match status" value="1"/>
</dbReference>
<dbReference type="Pfam" id="PF00127">
    <property type="entry name" value="Copper-bind"/>
    <property type="match status" value="1"/>
</dbReference>
<dbReference type="PRINTS" id="PR00156">
    <property type="entry name" value="COPPERBLUE"/>
</dbReference>
<dbReference type="PRINTS" id="PR00157">
    <property type="entry name" value="PLASTOCYANIN"/>
</dbReference>
<dbReference type="SUPFAM" id="SSF49503">
    <property type="entry name" value="Cupredoxins"/>
    <property type="match status" value="1"/>
</dbReference>
<dbReference type="PROSITE" id="PS00196">
    <property type="entry name" value="COPPER_BLUE"/>
    <property type="match status" value="1"/>
</dbReference>
<feature type="chain" id="PRO_0000085578" description="Plastocyanin">
    <location>
        <begin position="1"/>
        <end position="98"/>
    </location>
</feature>
<feature type="domain" description="Plastocyanin-like">
    <location>
        <begin position="1"/>
        <end position="98"/>
    </location>
</feature>
<feature type="binding site" evidence="1">
    <location>
        <position position="38"/>
    </location>
    <ligand>
        <name>Cu cation</name>
        <dbReference type="ChEBI" id="CHEBI:23378"/>
    </ligand>
</feature>
<feature type="binding site" evidence="1">
    <location>
        <position position="83"/>
    </location>
    <ligand>
        <name>Cu cation</name>
        <dbReference type="ChEBI" id="CHEBI:23378"/>
    </ligand>
</feature>
<feature type="binding site" evidence="1">
    <location>
        <position position="86"/>
    </location>
    <ligand>
        <name>Cu cation</name>
        <dbReference type="ChEBI" id="CHEBI:23378"/>
    </ligand>
</feature>
<feature type="binding site" evidence="1">
    <location>
        <position position="91"/>
    </location>
    <ligand>
        <name>Cu cation</name>
        <dbReference type="ChEBI" id="CHEBI:23378"/>
    </ligand>
</feature>
<reference key="1">
    <citation type="journal article" date="1989" name="J. Biochem.">
        <title>Some properties and amino acid sequence of plastocyanin from a green alga, Ulva arasakii.</title>
        <authorList>
            <person name="Yoshizaki F."/>
            <person name="Fukazawa T."/>
            <person name="Mishina Y."/>
            <person name="Sugimura Y."/>
        </authorList>
    </citation>
    <scope>PROTEIN SEQUENCE</scope>
    <scope>SUBCELLULAR LOCATION</scope>
</reference>
<sequence>AQIVKLGGDDGALAFVPSKISVAAGEAIEFVNNAGFPHNIVFDEDAVPAGVDADAISYDDYLNSKGETVVRKLSTPGVYGVYCEPHAGAGMKMTITVQ</sequence>
<protein>
    <recommendedName>
        <fullName>Plastocyanin</fullName>
    </recommendedName>
</protein>
<keyword id="KW-0150">Chloroplast</keyword>
<keyword id="KW-0186">Copper</keyword>
<keyword id="KW-0903">Direct protein sequencing</keyword>
<keyword id="KW-0249">Electron transport</keyword>
<keyword id="KW-0472">Membrane</keyword>
<keyword id="KW-0479">Metal-binding</keyword>
<keyword id="KW-0934">Plastid</keyword>
<keyword id="KW-0793">Thylakoid</keyword>
<keyword id="KW-0813">Transport</keyword>
<evidence type="ECO:0000250" key="1">
    <source>
        <dbReference type="UniProtKB" id="P18068"/>
    </source>
</evidence>
<evidence type="ECO:0000269" key="2">
    <source>
    </source>
</evidence>
<evidence type="ECO:0000305" key="3"/>
<name>PLAS_ULVAR</name>
<organism>
    <name type="scientific">Ulva arasakii</name>
    <name type="common">Sea lettuce</name>
    <dbReference type="NCBI Taxonomy" id="3119"/>
    <lineage>
        <taxon>Eukaryota</taxon>
        <taxon>Viridiplantae</taxon>
        <taxon>Chlorophyta</taxon>
        <taxon>Ulvophyceae</taxon>
        <taxon>OUU clade</taxon>
        <taxon>Ulvales</taxon>
        <taxon>Ulvaceae</taxon>
        <taxon>Ulva</taxon>
    </lineage>
</organism>
<accession>P13133</accession>